<comment type="function">
    <text evidence="1">Catalyzes the dehydration of inosose (2-keto-myo-inositol, 2KMI or 2,4,6/3,5-pentahydroxycyclohexanone) to 3D-(3,5/4)-trihydroxycyclohexane-1,2-dione (D-2,3-diketo-4-deoxy-epi-inositol).</text>
</comment>
<comment type="catalytic activity">
    <reaction evidence="1">
        <text>scyllo-inosose = 3D-3,5/4-trihydroxycyclohexane-1,2-dione + H2O</text>
        <dbReference type="Rhea" id="RHEA:14065"/>
        <dbReference type="ChEBI" id="CHEBI:15377"/>
        <dbReference type="ChEBI" id="CHEBI:17811"/>
        <dbReference type="ChEBI" id="CHEBI:28446"/>
        <dbReference type="EC" id="4.2.1.44"/>
    </reaction>
</comment>
<comment type="cofactor">
    <cofactor evidence="1">
        <name>glutathione</name>
        <dbReference type="ChEBI" id="CHEBI:57925"/>
    </cofactor>
</comment>
<comment type="cofactor">
    <cofactor evidence="1">
        <name>Co(2+)</name>
        <dbReference type="ChEBI" id="CHEBI:48828"/>
    </cofactor>
    <cofactor evidence="1">
        <name>Mn(2+)</name>
        <dbReference type="ChEBI" id="CHEBI:29035"/>
    </cofactor>
</comment>
<comment type="pathway">
    <text evidence="1">Polyol metabolism; myo-inositol degradation into acetyl-CoA; acetyl-CoA from myo-inositol: step 2/7.</text>
</comment>
<comment type="similarity">
    <text evidence="1">Belongs to the IolE/MocC family.</text>
</comment>
<sequence length="298" mass="33887">MLNTEKVKLGICPIGWTNDDMPDLGKENTFEQAVSEMALAGFKGTEVGNKYPKDVNVLKKALDLRNLQIASAWFSSFLTTKPYEETEKEFIAHRDFLHEMGAKVIVVSEQGHSIQGEMDTPICEGKYYFNEEEWKLLADGLNKLGRLAEDKGMKIVYHHHMGTGVQTTDEIDKLMSMTDESLVYLLFDTGHLVYSGENPIAILNKYANRIKHVHLKDIRADVLEKVKKEKMSFLMGVREGSFTVPGDGCIDFEPIFKILDENNYEGWILVEAEQDPAIANPFEYAMKARKYIKEKTGF</sequence>
<keyword id="KW-0170">Cobalt</keyword>
<keyword id="KW-0456">Lyase</keyword>
<keyword id="KW-0464">Manganese</keyword>
<organism>
    <name type="scientific">Clostridium beijerinckii (strain ATCC 51743 / NCIMB 8052)</name>
    <name type="common">Clostridium acetobutylicum</name>
    <dbReference type="NCBI Taxonomy" id="290402"/>
    <lineage>
        <taxon>Bacteria</taxon>
        <taxon>Bacillati</taxon>
        <taxon>Bacillota</taxon>
        <taxon>Clostridia</taxon>
        <taxon>Eubacteriales</taxon>
        <taxon>Clostridiaceae</taxon>
        <taxon>Clostridium</taxon>
    </lineage>
</organism>
<gene>
    <name evidence="1" type="primary">iolE</name>
    <name type="ordered locus">Cbei_4546</name>
</gene>
<accession>A6M225</accession>
<protein>
    <recommendedName>
        <fullName evidence="1">Inosose dehydratase</fullName>
        <ecNumber evidence="1">4.2.1.44</ecNumber>
    </recommendedName>
    <alternativeName>
        <fullName evidence="1">2-keto-myo-inositol dehydratase</fullName>
        <shortName evidence="1">2KMI dehydratase</shortName>
    </alternativeName>
</protein>
<name>IOLE_CLOB8</name>
<proteinExistence type="inferred from homology"/>
<feature type="chain" id="PRO_0000352361" description="Inosose dehydratase">
    <location>
        <begin position="1"/>
        <end position="298"/>
    </location>
</feature>
<reference key="1">
    <citation type="submission" date="2007-06" db="EMBL/GenBank/DDBJ databases">
        <title>Complete sequence of Clostridium beijerinckii NCIMB 8052.</title>
        <authorList>
            <consortium name="US DOE Joint Genome Institute"/>
            <person name="Copeland A."/>
            <person name="Lucas S."/>
            <person name="Lapidus A."/>
            <person name="Barry K."/>
            <person name="Detter J.C."/>
            <person name="Glavina del Rio T."/>
            <person name="Hammon N."/>
            <person name="Israni S."/>
            <person name="Dalin E."/>
            <person name="Tice H."/>
            <person name="Pitluck S."/>
            <person name="Sims D."/>
            <person name="Brettin T."/>
            <person name="Bruce D."/>
            <person name="Tapia R."/>
            <person name="Brainard J."/>
            <person name="Schmutz J."/>
            <person name="Larimer F."/>
            <person name="Land M."/>
            <person name="Hauser L."/>
            <person name="Kyrpides N."/>
            <person name="Mikhailova N."/>
            <person name="Bennet G."/>
            <person name="Cann I."/>
            <person name="Chen J.-S."/>
            <person name="Contreras A.L."/>
            <person name="Jones D."/>
            <person name="Kashket E."/>
            <person name="Mitchell W."/>
            <person name="Stoddard S."/>
            <person name="Schwarz W."/>
            <person name="Qureshi N."/>
            <person name="Young M."/>
            <person name="Shi Z."/>
            <person name="Ezeji T."/>
            <person name="White B."/>
            <person name="Blaschek H."/>
            <person name="Richardson P."/>
        </authorList>
    </citation>
    <scope>NUCLEOTIDE SEQUENCE [LARGE SCALE GENOMIC DNA]</scope>
    <source>
        <strain>ATCC 51743 / NCIMB 8052</strain>
    </source>
</reference>
<dbReference type="EC" id="4.2.1.44" evidence="1"/>
<dbReference type="EMBL" id="CP000721">
    <property type="protein sequence ID" value="ABR36655.1"/>
    <property type="molecule type" value="Genomic_DNA"/>
</dbReference>
<dbReference type="RefSeq" id="WP_012060702.1">
    <property type="nucleotide sequence ID" value="NC_009617.1"/>
</dbReference>
<dbReference type="SMR" id="A6M225"/>
<dbReference type="KEGG" id="cbe:Cbei_4546"/>
<dbReference type="eggNOG" id="COG1082">
    <property type="taxonomic scope" value="Bacteria"/>
</dbReference>
<dbReference type="HOGENOM" id="CLU_059523_0_0_9"/>
<dbReference type="UniPathway" id="UPA00076">
    <property type="reaction ID" value="UER00144"/>
</dbReference>
<dbReference type="Proteomes" id="UP000000565">
    <property type="component" value="Chromosome"/>
</dbReference>
<dbReference type="GO" id="GO:0030145">
    <property type="term" value="F:manganese ion binding"/>
    <property type="evidence" value="ECO:0007669"/>
    <property type="project" value="UniProtKB-UniRule"/>
</dbReference>
<dbReference type="GO" id="GO:0050114">
    <property type="term" value="F:myo-inosose-2 dehydratase activity"/>
    <property type="evidence" value="ECO:0007669"/>
    <property type="project" value="UniProtKB-UniRule"/>
</dbReference>
<dbReference type="GO" id="GO:0019310">
    <property type="term" value="P:inositol catabolic process"/>
    <property type="evidence" value="ECO:0007669"/>
    <property type="project" value="UniProtKB-UniRule"/>
</dbReference>
<dbReference type="Gene3D" id="3.20.20.150">
    <property type="entry name" value="Divalent-metal-dependent TIM barrel enzymes"/>
    <property type="match status" value="1"/>
</dbReference>
<dbReference type="HAMAP" id="MF_01672">
    <property type="entry name" value="IolE"/>
    <property type="match status" value="1"/>
</dbReference>
<dbReference type="InterPro" id="IPR023952">
    <property type="entry name" value="IolE"/>
</dbReference>
<dbReference type="InterPro" id="IPR030823">
    <property type="entry name" value="IolE/MocC"/>
</dbReference>
<dbReference type="InterPro" id="IPR050312">
    <property type="entry name" value="IolE/XylAMocC-like"/>
</dbReference>
<dbReference type="InterPro" id="IPR036237">
    <property type="entry name" value="Xyl_isomerase-like_sf"/>
</dbReference>
<dbReference type="InterPro" id="IPR013022">
    <property type="entry name" value="Xyl_isomerase-like_TIM-brl"/>
</dbReference>
<dbReference type="NCBIfam" id="TIGR04379">
    <property type="entry name" value="myo_inos_iolE"/>
    <property type="match status" value="1"/>
</dbReference>
<dbReference type="PANTHER" id="PTHR12110">
    <property type="entry name" value="HYDROXYPYRUVATE ISOMERASE"/>
    <property type="match status" value="1"/>
</dbReference>
<dbReference type="PANTHER" id="PTHR12110:SF41">
    <property type="entry name" value="INOSOSE DEHYDRATASE"/>
    <property type="match status" value="1"/>
</dbReference>
<dbReference type="Pfam" id="PF01261">
    <property type="entry name" value="AP_endonuc_2"/>
    <property type="match status" value="1"/>
</dbReference>
<dbReference type="SUPFAM" id="SSF51658">
    <property type="entry name" value="Xylose isomerase-like"/>
    <property type="match status" value="1"/>
</dbReference>
<evidence type="ECO:0000255" key="1">
    <source>
        <dbReference type="HAMAP-Rule" id="MF_01672"/>
    </source>
</evidence>